<keyword id="KW-0066">ATP synthesis</keyword>
<keyword id="KW-0067">ATP-binding</keyword>
<keyword id="KW-0139">CF(1)</keyword>
<keyword id="KW-0150">Chloroplast</keyword>
<keyword id="KW-0375">Hydrogen ion transport</keyword>
<keyword id="KW-0406">Ion transport</keyword>
<keyword id="KW-0472">Membrane</keyword>
<keyword id="KW-0547">Nucleotide-binding</keyword>
<keyword id="KW-0934">Plastid</keyword>
<keyword id="KW-0793">Thylakoid</keyword>
<keyword id="KW-1278">Translocase</keyword>
<keyword id="KW-0813">Transport</keyword>
<evidence type="ECO:0000255" key="1">
    <source>
        <dbReference type="HAMAP-Rule" id="MF_01347"/>
    </source>
</evidence>
<organism>
    <name type="scientific">Eucomis bicolor</name>
    <name type="common">King's flower</name>
    <name type="synonym">Pineapple lily</name>
    <dbReference type="NCBI Taxonomy" id="208119"/>
    <lineage>
        <taxon>Eukaryota</taxon>
        <taxon>Viridiplantae</taxon>
        <taxon>Streptophyta</taxon>
        <taxon>Embryophyta</taxon>
        <taxon>Tracheophyta</taxon>
        <taxon>Spermatophyta</taxon>
        <taxon>Magnoliopsida</taxon>
        <taxon>Liliopsida</taxon>
        <taxon>Asparagales</taxon>
        <taxon>Hyacinthaceae</taxon>
        <taxon>Hyacinthoideae</taxon>
        <taxon>Massonieae</taxon>
        <taxon>Eucomis</taxon>
    </lineage>
</organism>
<name>ATPB_EUCBI</name>
<accession>Q85V44</accession>
<proteinExistence type="inferred from homology"/>
<sequence length="495" mass="53351">MRINPTTSDPAVSTLEEKNLGRIAQIIGPVLDVVFPPGKMPNIYNALVVKGRDTVGQQINVTCEVQQLLGNNRVRAVAMSATDGLTRGMEVIDTGAALSVPVGGATLGRIFNVLGEPVDNLGPVDTRTTSPIHRSAPAFIQLDTKLSIFETGIKVVDLLAPYRRGGKIGLFGGAGVGKTVLIMELINNIAKAHGGVSVFGGVGERTREGNDLYMEMKESGVINEKNIAESKVALVYGQMNEPPGARMRVGLTALTMAEYIRDVNEQDVLLFIDNIFRFVQAGSEVSALLGRMPSAVGYQPTLSTEMGSLQERITSTKEGSITSIQAVYVPADDLTDPAPATTFAHLDATTVLSRGLAAKGIYPAVDPLDSTSTMLQPRIVGEEHYETAQRVKQTLQRYKELQDIIAILGLDELSEEDRLTVARARKIERFLSQPFFVAEVFTGSPGKYVGLTETIRGFQLILSGELDGLPEQAFYLVGNIDEATAKAMNLEGEKK</sequence>
<reference key="1">
    <citation type="journal article" date="2003" name="J. Plant Res.">
        <title>Phylogenetic relationships among genera of Massonieae (Hyacinthaceae) inferred from plastid DNA and seed morphology.</title>
        <authorList>
            <person name="Pfosser M.F."/>
            <person name="Wetschnig W."/>
            <person name="Ungar S."/>
            <person name="Prenner G."/>
        </authorList>
    </citation>
    <scope>NUCLEOTIDE SEQUENCE [GENOMIC DNA]</scope>
</reference>
<feature type="chain" id="PRO_0000254473" description="ATP synthase subunit beta, chloroplastic">
    <location>
        <begin position="1"/>
        <end position="495"/>
    </location>
</feature>
<feature type="binding site" evidence="1">
    <location>
        <begin position="172"/>
        <end position="179"/>
    </location>
    <ligand>
        <name>ATP</name>
        <dbReference type="ChEBI" id="CHEBI:30616"/>
    </ligand>
</feature>
<geneLocation type="chloroplast"/>
<protein>
    <recommendedName>
        <fullName evidence="1">ATP synthase subunit beta, chloroplastic</fullName>
        <ecNumber evidence="1">7.1.2.2</ecNumber>
    </recommendedName>
    <alternativeName>
        <fullName evidence="1">ATP synthase F1 sector subunit beta</fullName>
    </alternativeName>
    <alternativeName>
        <fullName evidence="1">F-ATPase subunit beta</fullName>
    </alternativeName>
</protein>
<dbReference type="EC" id="7.1.2.2" evidence="1"/>
<dbReference type="EMBL" id="AJ508198">
    <property type="protein sequence ID" value="CAD48100.1"/>
    <property type="molecule type" value="Genomic_DNA"/>
</dbReference>
<dbReference type="SMR" id="Q85V44"/>
<dbReference type="GO" id="GO:0009535">
    <property type="term" value="C:chloroplast thylakoid membrane"/>
    <property type="evidence" value="ECO:0007669"/>
    <property type="project" value="UniProtKB-SubCell"/>
</dbReference>
<dbReference type="GO" id="GO:0005739">
    <property type="term" value="C:mitochondrion"/>
    <property type="evidence" value="ECO:0007669"/>
    <property type="project" value="GOC"/>
</dbReference>
<dbReference type="GO" id="GO:0045259">
    <property type="term" value="C:proton-transporting ATP synthase complex"/>
    <property type="evidence" value="ECO:0007669"/>
    <property type="project" value="UniProtKB-KW"/>
</dbReference>
<dbReference type="GO" id="GO:0005524">
    <property type="term" value="F:ATP binding"/>
    <property type="evidence" value="ECO:0007669"/>
    <property type="project" value="UniProtKB-UniRule"/>
</dbReference>
<dbReference type="GO" id="GO:0016887">
    <property type="term" value="F:ATP hydrolysis activity"/>
    <property type="evidence" value="ECO:0007669"/>
    <property type="project" value="InterPro"/>
</dbReference>
<dbReference type="GO" id="GO:0046933">
    <property type="term" value="F:proton-transporting ATP synthase activity, rotational mechanism"/>
    <property type="evidence" value="ECO:0007669"/>
    <property type="project" value="UniProtKB-UniRule"/>
</dbReference>
<dbReference type="GO" id="GO:0042776">
    <property type="term" value="P:proton motive force-driven mitochondrial ATP synthesis"/>
    <property type="evidence" value="ECO:0007669"/>
    <property type="project" value="TreeGrafter"/>
</dbReference>
<dbReference type="CDD" id="cd18110">
    <property type="entry name" value="ATP-synt_F1_beta_C"/>
    <property type="match status" value="1"/>
</dbReference>
<dbReference type="CDD" id="cd18115">
    <property type="entry name" value="ATP-synt_F1_beta_N"/>
    <property type="match status" value="1"/>
</dbReference>
<dbReference type="CDD" id="cd01133">
    <property type="entry name" value="F1-ATPase_beta_CD"/>
    <property type="match status" value="1"/>
</dbReference>
<dbReference type="FunFam" id="1.10.1140.10:FF:000001">
    <property type="entry name" value="ATP synthase subunit beta"/>
    <property type="match status" value="1"/>
</dbReference>
<dbReference type="FunFam" id="3.40.50.300:FF:000004">
    <property type="entry name" value="ATP synthase subunit beta"/>
    <property type="match status" value="1"/>
</dbReference>
<dbReference type="FunFam" id="2.40.10.170:FF:000002">
    <property type="entry name" value="ATP synthase subunit beta, chloroplastic"/>
    <property type="match status" value="1"/>
</dbReference>
<dbReference type="Gene3D" id="2.40.10.170">
    <property type="match status" value="1"/>
</dbReference>
<dbReference type="Gene3D" id="1.10.1140.10">
    <property type="entry name" value="Bovine Mitochondrial F1-atpase, Atp Synthase Beta Chain, Chain D, domain 3"/>
    <property type="match status" value="1"/>
</dbReference>
<dbReference type="Gene3D" id="3.40.50.300">
    <property type="entry name" value="P-loop containing nucleotide triphosphate hydrolases"/>
    <property type="match status" value="1"/>
</dbReference>
<dbReference type="HAMAP" id="MF_01347">
    <property type="entry name" value="ATP_synth_beta_bact"/>
    <property type="match status" value="1"/>
</dbReference>
<dbReference type="InterPro" id="IPR003593">
    <property type="entry name" value="AAA+_ATPase"/>
</dbReference>
<dbReference type="InterPro" id="IPR055190">
    <property type="entry name" value="ATP-synt_VA_C"/>
</dbReference>
<dbReference type="InterPro" id="IPR005722">
    <property type="entry name" value="ATP_synth_F1_bsu"/>
</dbReference>
<dbReference type="InterPro" id="IPR020003">
    <property type="entry name" value="ATPase_a/bsu_AS"/>
</dbReference>
<dbReference type="InterPro" id="IPR050053">
    <property type="entry name" value="ATPase_alpha/beta_chains"/>
</dbReference>
<dbReference type="InterPro" id="IPR004100">
    <property type="entry name" value="ATPase_F1/V1/A1_a/bsu_N"/>
</dbReference>
<dbReference type="InterPro" id="IPR036121">
    <property type="entry name" value="ATPase_F1/V1/A1_a/bsu_N_sf"/>
</dbReference>
<dbReference type="InterPro" id="IPR000194">
    <property type="entry name" value="ATPase_F1/V1/A1_a/bsu_nucl-bd"/>
</dbReference>
<dbReference type="InterPro" id="IPR024034">
    <property type="entry name" value="ATPase_F1/V1_b/a_C"/>
</dbReference>
<dbReference type="InterPro" id="IPR027417">
    <property type="entry name" value="P-loop_NTPase"/>
</dbReference>
<dbReference type="NCBIfam" id="TIGR01039">
    <property type="entry name" value="atpD"/>
    <property type="match status" value="1"/>
</dbReference>
<dbReference type="PANTHER" id="PTHR15184">
    <property type="entry name" value="ATP SYNTHASE"/>
    <property type="match status" value="1"/>
</dbReference>
<dbReference type="PANTHER" id="PTHR15184:SF71">
    <property type="entry name" value="ATP SYNTHASE SUBUNIT BETA, MITOCHONDRIAL"/>
    <property type="match status" value="1"/>
</dbReference>
<dbReference type="Pfam" id="PF00006">
    <property type="entry name" value="ATP-synt_ab"/>
    <property type="match status" value="1"/>
</dbReference>
<dbReference type="Pfam" id="PF02874">
    <property type="entry name" value="ATP-synt_ab_N"/>
    <property type="match status" value="1"/>
</dbReference>
<dbReference type="Pfam" id="PF22919">
    <property type="entry name" value="ATP-synt_VA_C"/>
    <property type="match status" value="1"/>
</dbReference>
<dbReference type="SMART" id="SM00382">
    <property type="entry name" value="AAA"/>
    <property type="match status" value="1"/>
</dbReference>
<dbReference type="SUPFAM" id="SSF47917">
    <property type="entry name" value="C-terminal domain of alpha and beta subunits of F1 ATP synthase"/>
    <property type="match status" value="1"/>
</dbReference>
<dbReference type="SUPFAM" id="SSF50615">
    <property type="entry name" value="N-terminal domain of alpha and beta subunits of F1 ATP synthase"/>
    <property type="match status" value="1"/>
</dbReference>
<dbReference type="SUPFAM" id="SSF52540">
    <property type="entry name" value="P-loop containing nucleoside triphosphate hydrolases"/>
    <property type="match status" value="1"/>
</dbReference>
<dbReference type="PROSITE" id="PS00152">
    <property type="entry name" value="ATPASE_ALPHA_BETA"/>
    <property type="match status" value="1"/>
</dbReference>
<gene>
    <name evidence="1" type="primary">atpB</name>
</gene>
<comment type="function">
    <text evidence="1">Produces ATP from ADP in the presence of a proton gradient across the membrane. The catalytic sites are hosted primarily by the beta subunits.</text>
</comment>
<comment type="catalytic activity">
    <reaction evidence="1">
        <text>ATP + H2O + 4 H(+)(in) = ADP + phosphate + 5 H(+)(out)</text>
        <dbReference type="Rhea" id="RHEA:57720"/>
        <dbReference type="ChEBI" id="CHEBI:15377"/>
        <dbReference type="ChEBI" id="CHEBI:15378"/>
        <dbReference type="ChEBI" id="CHEBI:30616"/>
        <dbReference type="ChEBI" id="CHEBI:43474"/>
        <dbReference type="ChEBI" id="CHEBI:456216"/>
        <dbReference type="EC" id="7.1.2.2"/>
    </reaction>
</comment>
<comment type="subunit">
    <text evidence="1">F-type ATPases have 2 components, CF(1) - the catalytic core - and CF(0) - the membrane proton channel. CF(1) has five subunits: alpha(3), beta(3), gamma(1), delta(1), epsilon(1). CF(0) has four main subunits: a(1), b(1), b'(1) and c(9-12).</text>
</comment>
<comment type="subcellular location">
    <subcellularLocation>
        <location evidence="1">Plastid</location>
        <location evidence="1">Chloroplast thylakoid membrane</location>
        <topology evidence="1">Peripheral membrane protein</topology>
    </subcellularLocation>
</comment>
<comment type="similarity">
    <text evidence="1">Belongs to the ATPase alpha/beta chains family.</text>
</comment>